<feature type="chain" id="PRO_0000297640" description="Ras-GEF domain-containing family member 1B">
    <location>
        <begin position="1"/>
        <end position="472"/>
    </location>
</feature>
<feature type="domain" description="N-terminal Ras-GEF" evidence="2">
    <location>
        <begin position="34"/>
        <end position="164"/>
    </location>
</feature>
<feature type="domain" description="Ras-GEF" evidence="3">
    <location>
        <begin position="204"/>
        <end position="452"/>
    </location>
</feature>
<feature type="sequence conflict" description="In Ref. 1; CAI29727." evidence="4" ref="1">
    <original>Y</original>
    <variation>C</variation>
    <location>
        <position position="347"/>
    </location>
</feature>
<feature type="sequence conflict" description="In Ref. 1; CAH90706." evidence="4" ref="1">
    <original>S</original>
    <variation>P</variation>
    <location>
        <position position="466"/>
    </location>
</feature>
<feature type="sequence conflict" description="In Ref. 1; CAH90706." evidence="4" ref="1">
    <original>G</original>
    <variation>S</variation>
    <location>
        <position position="470"/>
    </location>
</feature>
<gene>
    <name type="primary">RASGEF1B</name>
</gene>
<protein>
    <recommendedName>
        <fullName>Ras-GEF domain-containing family member 1B</fullName>
    </recommendedName>
</protein>
<sequence>MPQTPPFSAMFDSSGYNRNLYQSAEDSCGGLYYHDNNLLSGSLEALIQHLVPNVDYYPDRTYIFTFLLSSRLFMHPYELMAKVCHLCVEHQRLSDPDSDKNQMRKIAPKVLQLLTEWTETFPYDFRDERMMRNLKDLAHRIASGEETYRKNVQQMMQCLIRKLAALSQYEEVLAKISSTSTDRLTVLKTKPQSIQRDIITVCNDPYTLAQQLTHIELERLNYIGPEEFVQAFVQKDPLDNDKSCYSERKKTRNLEAYVEWFNRLSYLVATEICMPVKKKHRARMIEYFIDVARECFNIGNFNSLMAIISGMNMSPVSRLKKTWAKVKTAKFDILEHQMDPSSNFYNYRTALRGAAQRSLTAHSSREKIVIPFFSLLIKDIYFLNEGCANRLPNGHVNFEKFWELAKQVSEFMTWKQVECPFERDRKILQYLLTVPVFSEDALYLASYESEGPENHIEKDRWKSLRSSLLGRV</sequence>
<accession>Q5RC04</accession>
<accession>Q5NVD6</accession>
<reference key="1">
    <citation type="submission" date="2004-11" db="EMBL/GenBank/DDBJ databases">
        <authorList>
            <consortium name="The German cDNA consortium"/>
        </authorList>
    </citation>
    <scope>NUCLEOTIDE SEQUENCE [LARGE SCALE MRNA]</scope>
    <source>
        <tissue>Brain cortex</tissue>
        <tissue>Kidney</tissue>
    </source>
</reference>
<proteinExistence type="evidence at transcript level"/>
<comment type="function">
    <text evidence="1">Guanine nucleotide exchange factor (GEF) with specificity for RAP2A, it doesn't seems to activate other Ras family proteins (in vitro).</text>
</comment>
<comment type="subunit">
    <text evidence="1">Interacts with CCDC124 during cytokinesis. Interacts with Ras family proteins (By similarity).</text>
</comment>
<comment type="subcellular location">
    <subcellularLocation>
        <location evidence="1">Early endosome</location>
    </subcellularLocation>
    <subcellularLocation>
        <location evidence="1">Late endosome</location>
    </subcellularLocation>
    <subcellularLocation>
        <location evidence="1">Midbody</location>
    </subcellularLocation>
    <text evidence="1">Localizes to midbody at telophase (By similarity). May shuttle between early and late endosomes. Does not colocalize with lysosomal markers (By similarity).</text>
</comment>
<evidence type="ECO:0000250" key="1"/>
<evidence type="ECO:0000255" key="2">
    <source>
        <dbReference type="PROSITE-ProRule" id="PRU00135"/>
    </source>
</evidence>
<evidence type="ECO:0000255" key="3">
    <source>
        <dbReference type="PROSITE-ProRule" id="PRU00168"/>
    </source>
</evidence>
<evidence type="ECO:0000305" key="4"/>
<dbReference type="EMBL" id="CR858478">
    <property type="protein sequence ID" value="CAH90706.1"/>
    <property type="molecule type" value="mRNA"/>
</dbReference>
<dbReference type="EMBL" id="CR926101">
    <property type="protein sequence ID" value="CAI29727.1"/>
    <property type="molecule type" value="mRNA"/>
</dbReference>
<dbReference type="RefSeq" id="NP_001127119.1">
    <property type="nucleotide sequence ID" value="NM_001133647.1"/>
</dbReference>
<dbReference type="RefSeq" id="XP_009238410.1">
    <property type="nucleotide sequence ID" value="XM_009240135.3"/>
</dbReference>
<dbReference type="SMR" id="Q5RC04"/>
<dbReference type="FunCoup" id="Q5RC04">
    <property type="interactions" value="849"/>
</dbReference>
<dbReference type="GeneID" id="100174165"/>
<dbReference type="KEGG" id="pon:100174165"/>
<dbReference type="CTD" id="153020"/>
<dbReference type="eggNOG" id="KOG3417">
    <property type="taxonomic scope" value="Eukaryota"/>
</dbReference>
<dbReference type="eggNOG" id="KOG3541">
    <property type="taxonomic scope" value="Eukaryota"/>
</dbReference>
<dbReference type="HOGENOM" id="CLU_022907_3_0_1"/>
<dbReference type="InParanoid" id="Q5RC04"/>
<dbReference type="OrthoDB" id="20825at2759"/>
<dbReference type="Proteomes" id="UP000001595">
    <property type="component" value="Unplaced"/>
</dbReference>
<dbReference type="GO" id="GO:0005769">
    <property type="term" value="C:early endosome"/>
    <property type="evidence" value="ECO:0007669"/>
    <property type="project" value="UniProtKB-SubCell"/>
</dbReference>
<dbReference type="GO" id="GO:0005770">
    <property type="term" value="C:late endosome"/>
    <property type="evidence" value="ECO:0007669"/>
    <property type="project" value="UniProtKB-SubCell"/>
</dbReference>
<dbReference type="GO" id="GO:0030496">
    <property type="term" value="C:midbody"/>
    <property type="evidence" value="ECO:0007669"/>
    <property type="project" value="UniProtKB-SubCell"/>
</dbReference>
<dbReference type="GO" id="GO:0005886">
    <property type="term" value="C:plasma membrane"/>
    <property type="evidence" value="ECO:0007669"/>
    <property type="project" value="TreeGrafter"/>
</dbReference>
<dbReference type="GO" id="GO:0005085">
    <property type="term" value="F:guanyl-nucleotide exchange factor activity"/>
    <property type="evidence" value="ECO:0000250"/>
    <property type="project" value="UniProtKB"/>
</dbReference>
<dbReference type="GO" id="GO:0007265">
    <property type="term" value="P:Ras protein signal transduction"/>
    <property type="evidence" value="ECO:0007669"/>
    <property type="project" value="TreeGrafter"/>
</dbReference>
<dbReference type="CDD" id="cd00155">
    <property type="entry name" value="RasGEF"/>
    <property type="match status" value="1"/>
</dbReference>
<dbReference type="CDD" id="cd06224">
    <property type="entry name" value="REM"/>
    <property type="match status" value="1"/>
</dbReference>
<dbReference type="FunFam" id="1.10.840.10:FF:000008">
    <property type="entry name" value="Ras-GEF domain-containing family member 1B"/>
    <property type="match status" value="1"/>
</dbReference>
<dbReference type="FunFam" id="1.20.870.10:FF:000007">
    <property type="entry name" value="Ras-GEF domain-containing family member 1B"/>
    <property type="match status" value="1"/>
</dbReference>
<dbReference type="Gene3D" id="1.10.840.10">
    <property type="entry name" value="Ras guanine-nucleotide exchange factors catalytic domain"/>
    <property type="match status" value="1"/>
</dbReference>
<dbReference type="Gene3D" id="1.20.870.10">
    <property type="entry name" value="Son of sevenless (SoS) protein Chain: S domain 1"/>
    <property type="match status" value="1"/>
</dbReference>
<dbReference type="InterPro" id="IPR008937">
    <property type="entry name" value="Ras-like_GEF"/>
</dbReference>
<dbReference type="InterPro" id="IPR000651">
    <property type="entry name" value="Ras-like_Gua-exchang_fac_N"/>
</dbReference>
<dbReference type="InterPro" id="IPR019804">
    <property type="entry name" value="Ras_G-nucl-exch_fac_CS"/>
</dbReference>
<dbReference type="InterPro" id="IPR023578">
    <property type="entry name" value="Ras_GEF_dom_sf"/>
</dbReference>
<dbReference type="InterPro" id="IPR001895">
    <property type="entry name" value="RASGEF_cat_dom"/>
</dbReference>
<dbReference type="InterPro" id="IPR036964">
    <property type="entry name" value="RASGEF_cat_dom_sf"/>
</dbReference>
<dbReference type="PANTHER" id="PTHR23113">
    <property type="entry name" value="GUANINE NUCLEOTIDE EXCHANGE FACTOR"/>
    <property type="match status" value="1"/>
</dbReference>
<dbReference type="PANTHER" id="PTHR23113:SF197">
    <property type="entry name" value="RAS-GEF DOMAIN-CONTAINING FAMILY MEMBER 1B"/>
    <property type="match status" value="1"/>
</dbReference>
<dbReference type="Pfam" id="PF00617">
    <property type="entry name" value="RasGEF"/>
    <property type="match status" value="1"/>
</dbReference>
<dbReference type="Pfam" id="PF00618">
    <property type="entry name" value="RasGEF_N"/>
    <property type="match status" value="1"/>
</dbReference>
<dbReference type="SMART" id="SM00147">
    <property type="entry name" value="RasGEF"/>
    <property type="match status" value="1"/>
</dbReference>
<dbReference type="SMART" id="SM00229">
    <property type="entry name" value="RasGEFN"/>
    <property type="match status" value="1"/>
</dbReference>
<dbReference type="SUPFAM" id="SSF48366">
    <property type="entry name" value="Ras GEF"/>
    <property type="match status" value="1"/>
</dbReference>
<dbReference type="PROSITE" id="PS00720">
    <property type="entry name" value="RASGEF"/>
    <property type="match status" value="1"/>
</dbReference>
<dbReference type="PROSITE" id="PS50009">
    <property type="entry name" value="RASGEF_CAT"/>
    <property type="match status" value="1"/>
</dbReference>
<dbReference type="PROSITE" id="PS50212">
    <property type="entry name" value="RASGEF_NTER"/>
    <property type="match status" value="1"/>
</dbReference>
<keyword id="KW-0967">Endosome</keyword>
<keyword id="KW-0344">Guanine-nucleotide releasing factor</keyword>
<keyword id="KW-1185">Reference proteome</keyword>
<name>RGF1B_PONAB</name>
<organism>
    <name type="scientific">Pongo abelii</name>
    <name type="common">Sumatran orangutan</name>
    <name type="synonym">Pongo pygmaeus abelii</name>
    <dbReference type="NCBI Taxonomy" id="9601"/>
    <lineage>
        <taxon>Eukaryota</taxon>
        <taxon>Metazoa</taxon>
        <taxon>Chordata</taxon>
        <taxon>Craniata</taxon>
        <taxon>Vertebrata</taxon>
        <taxon>Euteleostomi</taxon>
        <taxon>Mammalia</taxon>
        <taxon>Eutheria</taxon>
        <taxon>Euarchontoglires</taxon>
        <taxon>Primates</taxon>
        <taxon>Haplorrhini</taxon>
        <taxon>Catarrhini</taxon>
        <taxon>Hominidae</taxon>
        <taxon>Pongo</taxon>
    </lineage>
</organism>